<protein>
    <recommendedName>
        <fullName evidence="1">Serine hydroxymethyltransferase</fullName>
        <shortName evidence="1">SHMT</shortName>
        <shortName evidence="1">Serine methylase</shortName>
        <ecNumber evidence="1">2.1.2.1</ecNumber>
    </recommendedName>
</protein>
<proteinExistence type="inferred from homology"/>
<accession>B7MIN5</accession>
<evidence type="ECO:0000255" key="1">
    <source>
        <dbReference type="HAMAP-Rule" id="MF_00051"/>
    </source>
</evidence>
<name>GLYA_ECO45</name>
<comment type="function">
    <text evidence="1">Catalyzes the reversible interconversion of serine and glycine with tetrahydrofolate (THF) serving as the one-carbon carrier. This reaction serves as the major source of one-carbon groups required for the biosynthesis of purines, thymidylate, methionine, and other important biomolecules. Also exhibits THF-independent aldolase activity toward beta-hydroxyamino acids, producing glycine and aldehydes, via a retro-aldol mechanism.</text>
</comment>
<comment type="catalytic activity">
    <reaction evidence="1">
        <text>(6R)-5,10-methylene-5,6,7,8-tetrahydrofolate + glycine + H2O = (6S)-5,6,7,8-tetrahydrofolate + L-serine</text>
        <dbReference type="Rhea" id="RHEA:15481"/>
        <dbReference type="ChEBI" id="CHEBI:15377"/>
        <dbReference type="ChEBI" id="CHEBI:15636"/>
        <dbReference type="ChEBI" id="CHEBI:33384"/>
        <dbReference type="ChEBI" id="CHEBI:57305"/>
        <dbReference type="ChEBI" id="CHEBI:57453"/>
        <dbReference type="EC" id="2.1.2.1"/>
    </reaction>
</comment>
<comment type="cofactor">
    <cofactor evidence="1">
        <name>pyridoxal 5'-phosphate</name>
        <dbReference type="ChEBI" id="CHEBI:597326"/>
    </cofactor>
</comment>
<comment type="pathway">
    <text evidence="1">One-carbon metabolism; tetrahydrofolate interconversion.</text>
</comment>
<comment type="pathway">
    <text evidence="1">Amino-acid biosynthesis; glycine biosynthesis; glycine from L-serine: step 1/1.</text>
</comment>
<comment type="subunit">
    <text evidence="1">Homodimer.</text>
</comment>
<comment type="subcellular location">
    <subcellularLocation>
        <location evidence="1">Cytoplasm</location>
    </subcellularLocation>
</comment>
<comment type="similarity">
    <text evidence="1">Belongs to the SHMT family.</text>
</comment>
<sequence length="417" mass="45317">MLKREMNIADYDAELWQAMEQEKVRQEEHIELIASENYTSPRVMQAQGSQLTNKYAEGYPGKRYYGGCEYVDIVEQLAIDRAKELFGADYANVQPHSGSQANFAVYTALLEPGDTVLGMNLAHGGHLTHGSPVNFSGKLYNIVPYGIDATGHIDYADLEKQAKEHKPKMIIGGFSAYSGVVDWAKMREIADSIGAYLFVDMAHVAGLVAAGVYPNPVPHAHVVTTTTHKTLAGPRGGLILAKGGSEELYKKLNSAVFPGGQGGPLMHVIAGKAVALKEAMEPEFKTYQQQVAKNAKAMVEVFLERGYKVVSGGTDNHLFLVDLVDKNLTGKEADAALGRANITVNKNSVPNDPKSPFVTSGIRVGTPAITRRGFKEAEAKELAGWMCDVLDSINDEAVIERIKGKVLDICARYPVYA</sequence>
<reference key="1">
    <citation type="journal article" date="2009" name="PLoS Genet.">
        <title>Organised genome dynamics in the Escherichia coli species results in highly diverse adaptive paths.</title>
        <authorList>
            <person name="Touchon M."/>
            <person name="Hoede C."/>
            <person name="Tenaillon O."/>
            <person name="Barbe V."/>
            <person name="Baeriswyl S."/>
            <person name="Bidet P."/>
            <person name="Bingen E."/>
            <person name="Bonacorsi S."/>
            <person name="Bouchier C."/>
            <person name="Bouvet O."/>
            <person name="Calteau A."/>
            <person name="Chiapello H."/>
            <person name="Clermont O."/>
            <person name="Cruveiller S."/>
            <person name="Danchin A."/>
            <person name="Diard M."/>
            <person name="Dossat C."/>
            <person name="Karoui M.E."/>
            <person name="Frapy E."/>
            <person name="Garry L."/>
            <person name="Ghigo J.M."/>
            <person name="Gilles A.M."/>
            <person name="Johnson J."/>
            <person name="Le Bouguenec C."/>
            <person name="Lescat M."/>
            <person name="Mangenot S."/>
            <person name="Martinez-Jehanne V."/>
            <person name="Matic I."/>
            <person name="Nassif X."/>
            <person name="Oztas S."/>
            <person name="Petit M.A."/>
            <person name="Pichon C."/>
            <person name="Rouy Z."/>
            <person name="Ruf C.S."/>
            <person name="Schneider D."/>
            <person name="Tourret J."/>
            <person name="Vacherie B."/>
            <person name="Vallenet D."/>
            <person name="Medigue C."/>
            <person name="Rocha E.P.C."/>
            <person name="Denamur E."/>
        </authorList>
    </citation>
    <scope>NUCLEOTIDE SEQUENCE [LARGE SCALE GENOMIC DNA]</scope>
    <source>
        <strain>S88 / ExPEC</strain>
    </source>
</reference>
<dbReference type="EC" id="2.1.2.1" evidence="1"/>
<dbReference type="EMBL" id="CU928161">
    <property type="protein sequence ID" value="CAR03987.1"/>
    <property type="molecule type" value="Genomic_DNA"/>
</dbReference>
<dbReference type="RefSeq" id="WP_000919159.1">
    <property type="nucleotide sequence ID" value="NC_011742.1"/>
</dbReference>
<dbReference type="SMR" id="B7MIN5"/>
<dbReference type="GeneID" id="89517346"/>
<dbReference type="KEGG" id="ecz:ECS88_2721"/>
<dbReference type="HOGENOM" id="CLU_022477_2_1_6"/>
<dbReference type="UniPathway" id="UPA00193"/>
<dbReference type="UniPathway" id="UPA00288">
    <property type="reaction ID" value="UER01023"/>
</dbReference>
<dbReference type="Proteomes" id="UP000000747">
    <property type="component" value="Chromosome"/>
</dbReference>
<dbReference type="GO" id="GO:0005829">
    <property type="term" value="C:cytosol"/>
    <property type="evidence" value="ECO:0007669"/>
    <property type="project" value="TreeGrafter"/>
</dbReference>
<dbReference type="GO" id="GO:0004372">
    <property type="term" value="F:glycine hydroxymethyltransferase activity"/>
    <property type="evidence" value="ECO:0007669"/>
    <property type="project" value="UniProtKB-UniRule"/>
</dbReference>
<dbReference type="GO" id="GO:0030170">
    <property type="term" value="F:pyridoxal phosphate binding"/>
    <property type="evidence" value="ECO:0007669"/>
    <property type="project" value="UniProtKB-UniRule"/>
</dbReference>
<dbReference type="GO" id="GO:0019264">
    <property type="term" value="P:glycine biosynthetic process from serine"/>
    <property type="evidence" value="ECO:0007669"/>
    <property type="project" value="UniProtKB-UniRule"/>
</dbReference>
<dbReference type="GO" id="GO:0035999">
    <property type="term" value="P:tetrahydrofolate interconversion"/>
    <property type="evidence" value="ECO:0007669"/>
    <property type="project" value="UniProtKB-UniRule"/>
</dbReference>
<dbReference type="CDD" id="cd00378">
    <property type="entry name" value="SHMT"/>
    <property type="match status" value="1"/>
</dbReference>
<dbReference type="FunFam" id="3.40.640.10:FF:000001">
    <property type="entry name" value="Serine hydroxymethyltransferase"/>
    <property type="match status" value="1"/>
</dbReference>
<dbReference type="FunFam" id="3.90.1150.10:FF:000003">
    <property type="entry name" value="Serine hydroxymethyltransferase"/>
    <property type="match status" value="1"/>
</dbReference>
<dbReference type="Gene3D" id="3.90.1150.10">
    <property type="entry name" value="Aspartate Aminotransferase, domain 1"/>
    <property type="match status" value="1"/>
</dbReference>
<dbReference type="Gene3D" id="3.40.640.10">
    <property type="entry name" value="Type I PLP-dependent aspartate aminotransferase-like (Major domain)"/>
    <property type="match status" value="1"/>
</dbReference>
<dbReference type="HAMAP" id="MF_00051">
    <property type="entry name" value="SHMT"/>
    <property type="match status" value="1"/>
</dbReference>
<dbReference type="InterPro" id="IPR015424">
    <property type="entry name" value="PyrdxlP-dep_Trfase"/>
</dbReference>
<dbReference type="InterPro" id="IPR015421">
    <property type="entry name" value="PyrdxlP-dep_Trfase_major"/>
</dbReference>
<dbReference type="InterPro" id="IPR015422">
    <property type="entry name" value="PyrdxlP-dep_Trfase_small"/>
</dbReference>
<dbReference type="InterPro" id="IPR001085">
    <property type="entry name" value="Ser_HO-MeTrfase"/>
</dbReference>
<dbReference type="InterPro" id="IPR049943">
    <property type="entry name" value="Ser_HO-MeTrfase-like"/>
</dbReference>
<dbReference type="InterPro" id="IPR019798">
    <property type="entry name" value="Ser_HO-MeTrfase_PLP_BS"/>
</dbReference>
<dbReference type="InterPro" id="IPR039429">
    <property type="entry name" value="SHMT-like_dom"/>
</dbReference>
<dbReference type="NCBIfam" id="NF000586">
    <property type="entry name" value="PRK00011.1"/>
    <property type="match status" value="1"/>
</dbReference>
<dbReference type="PANTHER" id="PTHR11680">
    <property type="entry name" value="SERINE HYDROXYMETHYLTRANSFERASE"/>
    <property type="match status" value="1"/>
</dbReference>
<dbReference type="PANTHER" id="PTHR11680:SF50">
    <property type="entry name" value="SERINE HYDROXYMETHYLTRANSFERASE"/>
    <property type="match status" value="1"/>
</dbReference>
<dbReference type="Pfam" id="PF00464">
    <property type="entry name" value="SHMT"/>
    <property type="match status" value="1"/>
</dbReference>
<dbReference type="PIRSF" id="PIRSF000412">
    <property type="entry name" value="SHMT"/>
    <property type="match status" value="1"/>
</dbReference>
<dbReference type="SUPFAM" id="SSF53383">
    <property type="entry name" value="PLP-dependent transferases"/>
    <property type="match status" value="1"/>
</dbReference>
<dbReference type="PROSITE" id="PS00096">
    <property type="entry name" value="SHMT"/>
    <property type="match status" value="1"/>
</dbReference>
<gene>
    <name evidence="1" type="primary">glyA</name>
    <name type="ordered locus">ECS88_2721</name>
</gene>
<keyword id="KW-0007">Acetylation</keyword>
<keyword id="KW-0028">Amino-acid biosynthesis</keyword>
<keyword id="KW-0963">Cytoplasm</keyword>
<keyword id="KW-0554">One-carbon metabolism</keyword>
<keyword id="KW-0663">Pyridoxal phosphate</keyword>
<keyword id="KW-1185">Reference proteome</keyword>
<keyword id="KW-0808">Transferase</keyword>
<organism>
    <name type="scientific">Escherichia coli O45:K1 (strain S88 / ExPEC)</name>
    <dbReference type="NCBI Taxonomy" id="585035"/>
    <lineage>
        <taxon>Bacteria</taxon>
        <taxon>Pseudomonadati</taxon>
        <taxon>Pseudomonadota</taxon>
        <taxon>Gammaproteobacteria</taxon>
        <taxon>Enterobacterales</taxon>
        <taxon>Enterobacteriaceae</taxon>
        <taxon>Escherichia</taxon>
    </lineage>
</organism>
<feature type="chain" id="PRO_1000116828" description="Serine hydroxymethyltransferase">
    <location>
        <begin position="1"/>
        <end position="417"/>
    </location>
</feature>
<feature type="binding site" evidence="1">
    <location>
        <position position="121"/>
    </location>
    <ligand>
        <name>(6S)-5,6,7,8-tetrahydrofolate</name>
        <dbReference type="ChEBI" id="CHEBI:57453"/>
    </ligand>
</feature>
<feature type="binding site" evidence="1">
    <location>
        <begin position="125"/>
        <end position="127"/>
    </location>
    <ligand>
        <name>(6S)-5,6,7,8-tetrahydrofolate</name>
        <dbReference type="ChEBI" id="CHEBI:57453"/>
    </ligand>
</feature>
<feature type="binding site" evidence="1">
    <location>
        <begin position="355"/>
        <end position="357"/>
    </location>
    <ligand>
        <name>(6S)-5,6,7,8-tetrahydrofolate</name>
        <dbReference type="ChEBI" id="CHEBI:57453"/>
    </ligand>
</feature>
<feature type="site" description="Plays an important role in substrate specificity" evidence="1">
    <location>
        <position position="228"/>
    </location>
</feature>
<feature type="modified residue" description="N6-acetyllysine" evidence="1">
    <location>
        <position position="54"/>
    </location>
</feature>
<feature type="modified residue" description="N6-(pyridoxal phosphate)lysine" evidence="1">
    <location>
        <position position="229"/>
    </location>
</feature>
<feature type="modified residue" description="N6-acetyllysine" evidence="1">
    <location>
        <position position="250"/>
    </location>
</feature>
<feature type="modified residue" description="N6-acetyllysine" evidence="1">
    <location>
        <position position="285"/>
    </location>
</feature>
<feature type="modified residue" description="N6-acetyllysine" evidence="1">
    <location>
        <position position="354"/>
    </location>
</feature>
<feature type="modified residue" description="N6-acetyllysine" evidence="1">
    <location>
        <position position="375"/>
    </location>
</feature>